<protein>
    <recommendedName>
        <fullName>Crossover junction endodeoxyribonuclease RusA</fullName>
        <ecNumber>3.1.21.10</ecNumber>
    </recommendedName>
    <alternativeName>
        <fullName>Holliday junction nuclease RusA</fullName>
    </alternativeName>
    <alternativeName>
        <fullName>Holliday junction resolvase</fullName>
    </alternativeName>
</protein>
<keyword id="KW-0227">DNA damage</keyword>
<keyword id="KW-0233">DNA recombination</keyword>
<keyword id="KW-0234">DNA repair</keyword>
<keyword id="KW-0255">Endonuclease</keyword>
<keyword id="KW-0378">Hydrolase</keyword>
<keyword id="KW-0460">Magnesium</keyword>
<keyword id="KW-0479">Metal-binding</keyword>
<keyword id="KW-0540">Nuclease</keyword>
<proteinExistence type="inferred from homology"/>
<accession>Q0TIR3</accession>
<dbReference type="EC" id="3.1.21.10"/>
<dbReference type="EMBL" id="CP000247">
    <property type="protein sequence ID" value="ABG69166.1"/>
    <property type="molecule type" value="Genomic_DNA"/>
</dbReference>
<dbReference type="RefSeq" id="WP_001099712.1">
    <property type="nucleotide sequence ID" value="NC_008253.1"/>
</dbReference>
<dbReference type="SMR" id="Q0TIR3"/>
<dbReference type="KEGG" id="ecp:ECP_1155"/>
<dbReference type="HOGENOM" id="CLU_139466_0_2_6"/>
<dbReference type="Proteomes" id="UP000009182">
    <property type="component" value="Chromosome"/>
</dbReference>
<dbReference type="GO" id="GO:0008821">
    <property type="term" value="F:crossover junction DNA endonuclease activity"/>
    <property type="evidence" value="ECO:0007669"/>
    <property type="project" value="InterPro"/>
</dbReference>
<dbReference type="GO" id="GO:0000287">
    <property type="term" value="F:magnesium ion binding"/>
    <property type="evidence" value="ECO:0007669"/>
    <property type="project" value="InterPro"/>
</dbReference>
<dbReference type="GO" id="GO:0006310">
    <property type="term" value="P:DNA recombination"/>
    <property type="evidence" value="ECO:0007669"/>
    <property type="project" value="UniProtKB-KW"/>
</dbReference>
<dbReference type="GO" id="GO:0006281">
    <property type="term" value="P:DNA repair"/>
    <property type="evidence" value="ECO:0007669"/>
    <property type="project" value="UniProtKB-KW"/>
</dbReference>
<dbReference type="FunFam" id="3.30.1330.70:FF:000001">
    <property type="entry name" value="Crossover junction endodeoxyribonuclease RusA"/>
    <property type="match status" value="1"/>
</dbReference>
<dbReference type="Gene3D" id="3.30.1330.70">
    <property type="entry name" value="Holliday junction resolvase RusA"/>
    <property type="match status" value="1"/>
</dbReference>
<dbReference type="InterPro" id="IPR016281">
    <property type="entry name" value="Endonuclease_RusA"/>
</dbReference>
<dbReference type="InterPro" id="IPR008822">
    <property type="entry name" value="Endonuclease_RusA-like"/>
</dbReference>
<dbReference type="InterPro" id="IPR036614">
    <property type="entry name" value="RusA-like_sf"/>
</dbReference>
<dbReference type="NCBIfam" id="NF007305">
    <property type="entry name" value="PRK09786.1"/>
    <property type="match status" value="1"/>
</dbReference>
<dbReference type="Pfam" id="PF05866">
    <property type="entry name" value="RusA"/>
    <property type="match status" value="1"/>
</dbReference>
<dbReference type="PIRSF" id="PIRSF001007">
    <property type="entry name" value="RusA"/>
    <property type="match status" value="1"/>
</dbReference>
<dbReference type="SUPFAM" id="SSF103084">
    <property type="entry name" value="Holliday junction resolvase RusA"/>
    <property type="match status" value="1"/>
</dbReference>
<comment type="function">
    <text evidence="1">Endonuclease that resolves Holliday junction intermediates made during homologous genetic recombination and DNA repair. Exhibits sequence and structure-selective cleavage of four-way DNA junctions, where it introduces symmetrical nicks in two strands of the same polarity at the 5' side of CC dinucleotides. Corrects the defects in genetic recombination and DNA repair associated with inactivation of RuvAB or RuvC (By similarity).</text>
</comment>
<comment type="catalytic activity">
    <reaction>
        <text>Endonucleolytic cleavage at a junction such as a reciprocal single-stranded crossover between two homologous DNA duplexes (Holliday junction).</text>
        <dbReference type="EC" id="3.1.21.10"/>
    </reaction>
</comment>
<comment type="cofactor">
    <cofactor evidence="1">
        <name>Mg(2+)</name>
        <dbReference type="ChEBI" id="CHEBI:18420"/>
    </cofactor>
    <text evidence="1">Binds 1 Mg(2+) ion per subunit.</text>
</comment>
<comment type="subunit">
    <text evidence="1">Homodimer.</text>
</comment>
<comment type="similarity">
    <text evidence="2">Belongs to the RusA family.</text>
</comment>
<gene>
    <name type="primary">rusA</name>
    <name type="ordered locus">ECP_1155</name>
</gene>
<feature type="chain" id="PRO_0000324837" description="Crossover junction endodeoxyribonuclease RusA">
    <location>
        <begin position="1"/>
        <end position="120"/>
    </location>
</feature>
<feature type="region of interest" description="DNA-binding" evidence="1">
    <location>
        <begin position="13"/>
        <end position="16"/>
    </location>
</feature>
<feature type="region of interest" description="DNA-binding" evidence="1">
    <location>
        <begin position="66"/>
        <end position="73"/>
    </location>
</feature>
<feature type="binding site" evidence="1">
    <location>
        <position position="70"/>
    </location>
    <ligand>
        <name>Mg(2+)</name>
        <dbReference type="ChEBI" id="CHEBI:18420"/>
    </ligand>
</feature>
<feature type="binding site" evidence="1">
    <location>
        <position position="72"/>
    </location>
    <ligand>
        <name>Mg(2+)</name>
        <dbReference type="ChEBI" id="CHEBI:18420"/>
    </ligand>
</feature>
<feature type="binding site" evidence="1">
    <location>
        <position position="91"/>
    </location>
    <ligand>
        <name>Mg(2+)</name>
        <dbReference type="ChEBI" id="CHEBI:18420"/>
    </ligand>
</feature>
<reference key="1">
    <citation type="journal article" date="2006" name="Mol. Microbiol.">
        <title>Role of pathogenicity island-associated integrases in the genome plasticity of uropathogenic Escherichia coli strain 536.</title>
        <authorList>
            <person name="Hochhut B."/>
            <person name="Wilde C."/>
            <person name="Balling G."/>
            <person name="Middendorf B."/>
            <person name="Dobrindt U."/>
            <person name="Brzuszkiewicz E."/>
            <person name="Gottschalk G."/>
            <person name="Carniel E."/>
            <person name="Hacker J."/>
        </authorList>
    </citation>
    <scope>NUCLEOTIDE SEQUENCE [LARGE SCALE GENOMIC DNA]</scope>
    <source>
        <strain>536 / UPEC</strain>
    </source>
</reference>
<organism>
    <name type="scientific">Escherichia coli O6:K15:H31 (strain 536 / UPEC)</name>
    <dbReference type="NCBI Taxonomy" id="362663"/>
    <lineage>
        <taxon>Bacteria</taxon>
        <taxon>Pseudomonadati</taxon>
        <taxon>Pseudomonadota</taxon>
        <taxon>Gammaproteobacteria</taxon>
        <taxon>Enterobacterales</taxon>
        <taxon>Enterobacteriaceae</taxon>
        <taxon>Escherichia</taxon>
    </lineage>
</organism>
<evidence type="ECO:0000250" key="1"/>
<evidence type="ECO:0000305" key="2"/>
<sequence>MNTYSITLPWPPSNNRYYRHNRGRTHVSAEGQAYRDNVARIIKNAMLDIGLAMPVKIRIECHMPDRRRRDLDNLQKAAFDALTKAGFWLDDAQVVDYRVVKMPVTKGGRLELTITEMGNE</sequence>
<name>RUSA_ECOL5</name>